<feature type="transit peptide" description="Chloroplast" evidence="1">
    <location>
        <begin position="1"/>
        <end position="54"/>
    </location>
</feature>
<feature type="chain" id="PRO_0000419919" description="Sec-independent protein translocase protein TATA, chloroplastic">
    <location>
        <begin position="55"/>
        <end position="137"/>
    </location>
</feature>
<feature type="topological domain" description="Lumenal" evidence="1">
    <location>
        <begin position="55"/>
        <end position="56"/>
    </location>
</feature>
<feature type="transmembrane region" description="Helical" evidence="1">
    <location>
        <begin position="57"/>
        <end position="77"/>
    </location>
</feature>
<feature type="topological domain" description="Stromal" evidence="1">
    <location>
        <begin position="78"/>
        <end position="137"/>
    </location>
</feature>
<feature type="region of interest" description="Disordered" evidence="2">
    <location>
        <begin position="104"/>
        <end position="137"/>
    </location>
</feature>
<feature type="mutagenesis site" description="Loss of protein translocation; when associated with C-64." evidence="9">
    <original>G</original>
    <variation>C</variation>
    <location>
        <position position="60"/>
    </location>
</feature>
<feature type="mutagenesis site" description="Loss of protein translocation; when associated with C-64." evidence="9">
    <original>G</original>
    <variation>C</variation>
    <location>
        <position position="62"/>
    </location>
</feature>
<feature type="mutagenesis site" description="Loss of protein translocation; when associated with C-60 or C-62." evidence="9">
    <original>P</original>
    <variation>C</variation>
    <location>
        <position position="64"/>
    </location>
</feature>
<feature type="mutagenesis site" description="Loss of protein translocation." evidence="5 6 7">
    <original>E</original>
    <variation>A</variation>
    <variation>D</variation>
    <variation>Q</variation>
    <location>
        <position position="65"/>
    </location>
</feature>
<feature type="mutagenesis site" description="No effect on protein translocation." evidence="5">
    <original>L</original>
    <variation>I</variation>
    <location>
        <position position="75"/>
    </location>
</feature>
<keyword id="KW-0150">Chloroplast</keyword>
<keyword id="KW-0472">Membrane</keyword>
<keyword id="KW-0934">Plastid</keyword>
<keyword id="KW-0653">Protein transport</keyword>
<keyword id="KW-0793">Thylakoid</keyword>
<keyword id="KW-0809">Transit peptide</keyword>
<keyword id="KW-0811">Translocation</keyword>
<keyword id="KW-0812">Transmembrane</keyword>
<keyword id="KW-1133">Transmembrane helix</keyword>
<keyword id="KW-0813">Transport</keyword>
<comment type="function">
    <text evidence="3 5 6 7 8 9 10 11">Part of the twin-arginine translocation (Tat) system that transports large folded proteins containing a characteristic twin-arginine motif in their signal peptide across the thylakoid membrane. Involved in delta pH-dependent protein transport required for chloroplast development, especially thylakoid membrane formation. TATC and TATB mediate precursor recognition, whereas TATA facilitates translocation.</text>
</comment>
<comment type="subunit">
    <text evidence="4 5 6 7 9 10">In thylakoid membranes, TATC and TATB form a large receptor complex, containing about eight TATC-TATB pairs, which binds the precursor protein. Twin arginine signal peptide promotes pH-triggered docking of TATA oligomers to TATC-TATB receptor complex, inducing a conformational switch of TATA that results in activation of the translocase. TATA dissociates from TATC-TATB upon completion of translocation. According to PubMed:22564412, it is estimated that the translocase fully saturated with precursor proteins and TATA is an 2.2-megadalton complex that can individually transport eight precursor proteins or cooperatively transport multimeric precursors.</text>
</comment>
<comment type="subcellular location">
    <subcellularLocation>
        <location evidence="13 14">Plastid</location>
        <location evidence="13 14">Chloroplast thylakoid membrane</location>
        <topology evidence="13 14">Single-pass membrane protein</topology>
    </subcellularLocation>
    <text>The C-terminus is located in the stroma.</text>
</comment>
<comment type="similarity">
    <text evidence="12">Belongs to the TatA/E family.</text>
</comment>
<reference key="1">
    <citation type="journal article" date="1999" name="J. Cell Biol.">
        <title>Component specificity for the thylakoidal Sec and Delta pH-dependent protein transport pathways.</title>
        <authorList>
            <person name="Mori M."/>
            <person name="Summer E.J."/>
            <person name="Ma X."/>
            <person name="Cline K."/>
        </authorList>
    </citation>
    <scope>NUCLEOTIDE SEQUENCE [MRNA]</scope>
    <scope>FUNCTION</scope>
    <scope>SUBCELLULAR LOCATION</scope>
</reference>
<reference key="2">
    <citation type="journal article" date="2002" name="J. Cell Biol.">
        <title>A twin arginine signal peptide and the pH gradient trigger reversible assembly of the thylakoid [Delta]pH/Tat translocase.</title>
        <authorList>
            <person name="Mori H."/>
            <person name="Cline K."/>
        </authorList>
    </citation>
    <scope>SUBUNIT</scope>
</reference>
<reference key="3">
    <citation type="journal article" date="2003" name="Eur. J. Biochem.">
        <title>Functional assembly of thylakoid deltapH-dependent/Tat protein transport pathway components in vitro.</title>
        <authorList>
            <person name="Fincher V."/>
            <person name="Dabney-Smith C."/>
            <person name="Cline K."/>
        </authorList>
    </citation>
    <scope>FUNCTION</scope>
    <scope>SUBUNIT</scope>
    <scope>SUBCELLULAR LOCATION</scope>
    <scope>MUTAGENESIS OF GLU-65</scope>
</reference>
<reference key="4">
    <citation type="journal article" date="2003" name="J. Biol. Chem.">
        <title>Requirement of a Tha4-conserved transmembrane glutamate in thylakoid Tat translocase assembly revealed by biochemical complementation.</title>
        <authorList>
            <person name="Dabney-Smith C."/>
            <person name="Mori H."/>
            <person name="Cline K."/>
        </authorList>
    </citation>
    <scope>FUNCTION</scope>
    <scope>SUBUNIT</scope>
    <scope>MUTAGENESIS OF GLU-65 AND LEU-75</scope>
</reference>
<reference key="5">
    <citation type="journal article" date="2006" name="J. Biol. Chem.">
        <title>Oligomers of Tha4 organize at the thylakoid Tat translocase during protein transport.</title>
        <authorList>
            <person name="Dabney-Smith C."/>
            <person name="Mori H."/>
            <person name="Cline K."/>
        </authorList>
    </citation>
    <scope>FUNCTION</scope>
    <scope>SUBUNIT</scope>
    <scope>MUTAGENESIS OF GLU-65</scope>
</reference>
<reference key="6">
    <citation type="journal article" date="2008" name="J. Biol. Chem.">
        <title>A stromal pool of TatA promotes Tat-dependent protein transport across the thylakoid membrane.</title>
        <authorList>
            <person name="Frielingsdorf S."/>
            <person name="Jakob M."/>
            <person name="Kloesgen R.B."/>
        </authorList>
    </citation>
    <scope>FUNCTION</scope>
</reference>
<reference key="7">
    <citation type="journal article" date="2009" name="Mol. Biol. Cell">
        <title>Clustering of C-terminal stromal domains of Tha4 homo-oligomers during translocation by the Tat protein transport system.</title>
        <authorList>
            <person name="Dabney-Smith C."/>
            <person name="Cline K."/>
        </authorList>
    </citation>
    <scope>FUNCTION</scope>
    <scope>SUBUNIT</scope>
    <scope>MUTAGENESIS OF GLY-60; GLY-62 AND PRO-64</scope>
</reference>
<reference key="8">
    <citation type="journal article" date="2012" name="J. Biol. Chem.">
        <title>The chloroplast twin arginine transport (Tat) component, Tha4, undergoes conformational changes leading to Tat protein transport.</title>
        <authorList>
            <person name="Aldridge C."/>
            <person name="Storm A."/>
            <person name="Cline K."/>
            <person name="Dabney-Smith C."/>
        </authorList>
    </citation>
    <scope>FUNCTION</scope>
    <scope>TOPOLOGY</scope>
</reference>
<reference key="9">
    <citation type="journal article" date="2012" name="J. Cell Biol.">
        <title>Stoichiometry for binding and transport by the twin arginine translocation system.</title>
        <authorList>
            <person name="Celedon J.M."/>
            <person name="Cline K."/>
        </authorList>
    </citation>
    <scope>FUNCTION</scope>
    <scope>SUBUNIT</scope>
</reference>
<name>TATA_PEA</name>
<sequence>MEITLSISSSSVIPTRLPNSSCYSNLSFLSSNSNTSSLLLKKARIKTRTTKGFTCNAFFGLGVPELVVIAGVAALVFGPKKLPEVGRSIGQTVKSFQQAAKEFETELKKEPNPTEEISVASEQEKQEIKVSSTKDNV</sequence>
<proteinExistence type="evidence at protein level"/>
<accession>Q9XH46</accession>
<gene>
    <name type="primary">TATA</name>
    <name type="synonym">THA4</name>
</gene>
<dbReference type="EMBL" id="AF144708">
    <property type="protein sequence ID" value="AAD33943.1"/>
    <property type="molecule type" value="mRNA"/>
</dbReference>
<dbReference type="SMR" id="Q9XH46"/>
<dbReference type="GO" id="GO:0009535">
    <property type="term" value="C:chloroplast thylakoid membrane"/>
    <property type="evidence" value="ECO:0000314"/>
    <property type="project" value="UniProtKB"/>
</dbReference>
<dbReference type="GO" id="GO:0033281">
    <property type="term" value="C:TAT protein transport complex"/>
    <property type="evidence" value="ECO:0000314"/>
    <property type="project" value="UniProtKB"/>
</dbReference>
<dbReference type="GO" id="GO:0042651">
    <property type="term" value="C:thylakoid membrane"/>
    <property type="evidence" value="ECO:0000314"/>
    <property type="project" value="UniProtKB"/>
</dbReference>
<dbReference type="GO" id="GO:0009977">
    <property type="term" value="F:proton motive force dependent protein transmembrane transporter activity"/>
    <property type="evidence" value="ECO:0000315"/>
    <property type="project" value="UniProtKB"/>
</dbReference>
<dbReference type="GO" id="GO:0045038">
    <property type="term" value="P:protein import into chloroplast thylakoid membrane"/>
    <property type="evidence" value="ECO:0000314"/>
    <property type="project" value="UniProtKB"/>
</dbReference>
<dbReference type="GO" id="GO:0043953">
    <property type="term" value="P:protein transport by the Tat complex"/>
    <property type="evidence" value="ECO:0000314"/>
    <property type="project" value="UniProtKB"/>
</dbReference>
<dbReference type="FunFam" id="1.20.5.3310:FF:000003">
    <property type="entry name" value="Sec-independent protein translocase protein TATB, chloroplastic"/>
    <property type="match status" value="1"/>
</dbReference>
<dbReference type="Gene3D" id="1.20.5.3310">
    <property type="match status" value="1"/>
</dbReference>
<dbReference type="HAMAP" id="MF_00236">
    <property type="entry name" value="TatA_E"/>
    <property type="match status" value="1"/>
</dbReference>
<dbReference type="InterPro" id="IPR003369">
    <property type="entry name" value="TatA/B/E"/>
</dbReference>
<dbReference type="InterPro" id="IPR006312">
    <property type="entry name" value="TatA/E"/>
</dbReference>
<dbReference type="NCBIfam" id="NF011429">
    <property type="entry name" value="PRK14857.1"/>
    <property type="match status" value="1"/>
</dbReference>
<dbReference type="NCBIfam" id="NF011430">
    <property type="entry name" value="PRK14861.1"/>
    <property type="match status" value="1"/>
</dbReference>
<dbReference type="NCBIfam" id="TIGR01411">
    <property type="entry name" value="tatAE"/>
    <property type="match status" value="1"/>
</dbReference>
<dbReference type="PANTHER" id="PTHR33162">
    <property type="entry name" value="SEC-INDEPENDENT PROTEIN TRANSLOCASE PROTEIN TATA, CHLOROPLASTIC"/>
    <property type="match status" value="1"/>
</dbReference>
<dbReference type="PANTHER" id="PTHR33162:SF1">
    <property type="entry name" value="SEC-INDEPENDENT PROTEIN TRANSLOCASE PROTEIN TATA, CHLOROPLASTIC"/>
    <property type="match status" value="1"/>
</dbReference>
<dbReference type="Pfam" id="PF02416">
    <property type="entry name" value="TatA_B_E"/>
    <property type="match status" value="1"/>
</dbReference>
<dbReference type="PRINTS" id="PR01506">
    <property type="entry name" value="TATBPROTEIN"/>
</dbReference>
<protein>
    <recommendedName>
        <fullName>Sec-independent protein translocase protein TATA, chloroplastic</fullName>
    </recommendedName>
    <alternativeName>
        <fullName>Protein THYLAKOID ASSEMBLY 4</fullName>
    </alternativeName>
    <alternativeName>
        <fullName>Protein TWIN-ARGININE TRANSLOCATION A</fullName>
    </alternativeName>
</protein>
<evidence type="ECO:0000255" key="1"/>
<evidence type="ECO:0000256" key="2">
    <source>
        <dbReference type="SAM" id="MobiDB-lite"/>
    </source>
</evidence>
<evidence type="ECO:0000269" key="3">
    <source>
    </source>
</evidence>
<evidence type="ECO:0000269" key="4">
    <source>
    </source>
</evidence>
<evidence type="ECO:0000269" key="5">
    <source>
    </source>
</evidence>
<evidence type="ECO:0000269" key="6">
    <source>
    </source>
</evidence>
<evidence type="ECO:0000269" key="7">
    <source>
    </source>
</evidence>
<evidence type="ECO:0000269" key="8">
    <source>
    </source>
</evidence>
<evidence type="ECO:0000269" key="9">
    <source>
    </source>
</evidence>
<evidence type="ECO:0000269" key="10">
    <source>
    </source>
</evidence>
<evidence type="ECO:0000269" key="11">
    <source>
    </source>
</evidence>
<evidence type="ECO:0000305" key="12"/>
<evidence type="ECO:0000305" key="13">
    <source>
    </source>
</evidence>
<evidence type="ECO:0000305" key="14">
    <source>
    </source>
</evidence>
<organism>
    <name type="scientific">Pisum sativum</name>
    <name type="common">Garden pea</name>
    <name type="synonym">Lathyrus oleraceus</name>
    <dbReference type="NCBI Taxonomy" id="3888"/>
    <lineage>
        <taxon>Eukaryota</taxon>
        <taxon>Viridiplantae</taxon>
        <taxon>Streptophyta</taxon>
        <taxon>Embryophyta</taxon>
        <taxon>Tracheophyta</taxon>
        <taxon>Spermatophyta</taxon>
        <taxon>Magnoliopsida</taxon>
        <taxon>eudicotyledons</taxon>
        <taxon>Gunneridae</taxon>
        <taxon>Pentapetalae</taxon>
        <taxon>rosids</taxon>
        <taxon>fabids</taxon>
        <taxon>Fabales</taxon>
        <taxon>Fabaceae</taxon>
        <taxon>Papilionoideae</taxon>
        <taxon>50 kb inversion clade</taxon>
        <taxon>NPAAA clade</taxon>
        <taxon>Hologalegina</taxon>
        <taxon>IRL clade</taxon>
        <taxon>Fabeae</taxon>
        <taxon>Pisum</taxon>
    </lineage>
</organism>